<sequence length="66" mass="7477">MKKEIHPEYVECKVSCACGNTFTTKSNKAELRVDICSNCHPFFTGSEKIVDAAGRVEKFKKKYAMQ</sequence>
<evidence type="ECO:0000255" key="1">
    <source>
        <dbReference type="HAMAP-Rule" id="MF_00501"/>
    </source>
</evidence>
<evidence type="ECO:0000305" key="2"/>
<name>RL31_CAMJ8</name>
<feature type="chain" id="PRO_1000126581" description="Large ribosomal subunit protein bL31">
    <location>
        <begin position="1"/>
        <end position="66"/>
    </location>
</feature>
<feature type="binding site" evidence="1">
    <location>
        <position position="16"/>
    </location>
    <ligand>
        <name>Zn(2+)</name>
        <dbReference type="ChEBI" id="CHEBI:29105"/>
    </ligand>
</feature>
<feature type="binding site" evidence="1">
    <location>
        <position position="18"/>
    </location>
    <ligand>
        <name>Zn(2+)</name>
        <dbReference type="ChEBI" id="CHEBI:29105"/>
    </ligand>
</feature>
<feature type="binding site" evidence="1">
    <location>
        <position position="36"/>
    </location>
    <ligand>
        <name>Zn(2+)</name>
        <dbReference type="ChEBI" id="CHEBI:29105"/>
    </ligand>
</feature>
<feature type="binding site" evidence="1">
    <location>
        <position position="39"/>
    </location>
    <ligand>
        <name>Zn(2+)</name>
        <dbReference type="ChEBI" id="CHEBI:29105"/>
    </ligand>
</feature>
<dbReference type="EMBL" id="CP000814">
    <property type="protein sequence ID" value="ABV51751.1"/>
    <property type="molecule type" value="Genomic_DNA"/>
</dbReference>
<dbReference type="RefSeq" id="WP_002851603.1">
    <property type="nucleotide sequence ID" value="NC_009839.1"/>
</dbReference>
<dbReference type="SMR" id="A8FJW4"/>
<dbReference type="KEGG" id="cju:C8J_0152"/>
<dbReference type="HOGENOM" id="CLU_114306_4_3_7"/>
<dbReference type="GO" id="GO:1990904">
    <property type="term" value="C:ribonucleoprotein complex"/>
    <property type="evidence" value="ECO:0007669"/>
    <property type="project" value="UniProtKB-KW"/>
</dbReference>
<dbReference type="GO" id="GO:0005840">
    <property type="term" value="C:ribosome"/>
    <property type="evidence" value="ECO:0007669"/>
    <property type="project" value="UniProtKB-KW"/>
</dbReference>
<dbReference type="GO" id="GO:0046872">
    <property type="term" value="F:metal ion binding"/>
    <property type="evidence" value="ECO:0007669"/>
    <property type="project" value="UniProtKB-KW"/>
</dbReference>
<dbReference type="GO" id="GO:0019843">
    <property type="term" value="F:rRNA binding"/>
    <property type="evidence" value="ECO:0007669"/>
    <property type="project" value="UniProtKB-KW"/>
</dbReference>
<dbReference type="GO" id="GO:0003735">
    <property type="term" value="F:structural constituent of ribosome"/>
    <property type="evidence" value="ECO:0007669"/>
    <property type="project" value="InterPro"/>
</dbReference>
<dbReference type="GO" id="GO:0006412">
    <property type="term" value="P:translation"/>
    <property type="evidence" value="ECO:0007669"/>
    <property type="project" value="UniProtKB-UniRule"/>
</dbReference>
<dbReference type="Gene3D" id="4.10.830.30">
    <property type="entry name" value="Ribosomal protein L31"/>
    <property type="match status" value="1"/>
</dbReference>
<dbReference type="HAMAP" id="MF_00501">
    <property type="entry name" value="Ribosomal_bL31_1"/>
    <property type="match status" value="1"/>
</dbReference>
<dbReference type="InterPro" id="IPR034704">
    <property type="entry name" value="Ribosomal_bL28/bL31-like_sf"/>
</dbReference>
<dbReference type="InterPro" id="IPR002150">
    <property type="entry name" value="Ribosomal_bL31"/>
</dbReference>
<dbReference type="InterPro" id="IPR027491">
    <property type="entry name" value="Ribosomal_bL31_A"/>
</dbReference>
<dbReference type="InterPro" id="IPR042105">
    <property type="entry name" value="Ribosomal_bL31_sf"/>
</dbReference>
<dbReference type="NCBIfam" id="TIGR00105">
    <property type="entry name" value="L31"/>
    <property type="match status" value="1"/>
</dbReference>
<dbReference type="NCBIfam" id="NF000612">
    <property type="entry name" value="PRK00019.1"/>
    <property type="match status" value="1"/>
</dbReference>
<dbReference type="NCBIfam" id="NF001809">
    <property type="entry name" value="PRK00528.1"/>
    <property type="match status" value="1"/>
</dbReference>
<dbReference type="PANTHER" id="PTHR33280">
    <property type="entry name" value="50S RIBOSOMAL PROTEIN L31, CHLOROPLASTIC"/>
    <property type="match status" value="1"/>
</dbReference>
<dbReference type="PANTHER" id="PTHR33280:SF1">
    <property type="entry name" value="LARGE RIBOSOMAL SUBUNIT PROTEIN BL31C"/>
    <property type="match status" value="1"/>
</dbReference>
<dbReference type="Pfam" id="PF01197">
    <property type="entry name" value="Ribosomal_L31"/>
    <property type="match status" value="1"/>
</dbReference>
<dbReference type="PRINTS" id="PR01249">
    <property type="entry name" value="RIBOSOMALL31"/>
</dbReference>
<dbReference type="SUPFAM" id="SSF143800">
    <property type="entry name" value="L28p-like"/>
    <property type="match status" value="1"/>
</dbReference>
<dbReference type="PROSITE" id="PS01143">
    <property type="entry name" value="RIBOSOMAL_L31"/>
    <property type="match status" value="1"/>
</dbReference>
<proteinExistence type="inferred from homology"/>
<accession>A8FJW4</accession>
<gene>
    <name evidence="1" type="primary">rpmE</name>
    <name type="ordered locus">C8J_0152</name>
</gene>
<reference key="1">
    <citation type="journal article" date="2007" name="J. Bacteriol.">
        <title>The complete genome sequence of Campylobacter jejuni strain 81116 (NCTC11828).</title>
        <authorList>
            <person name="Pearson B.M."/>
            <person name="Gaskin D.J.H."/>
            <person name="Segers R.P.A.M."/>
            <person name="Wells J.M."/>
            <person name="Nuijten P.J.M."/>
            <person name="van Vliet A.H.M."/>
        </authorList>
    </citation>
    <scope>NUCLEOTIDE SEQUENCE [LARGE SCALE GENOMIC DNA]</scope>
    <source>
        <strain>81116 / NCTC 11828</strain>
    </source>
</reference>
<protein>
    <recommendedName>
        <fullName evidence="1">Large ribosomal subunit protein bL31</fullName>
    </recommendedName>
    <alternativeName>
        <fullName evidence="2">50S ribosomal protein L31</fullName>
    </alternativeName>
</protein>
<organism>
    <name type="scientific">Campylobacter jejuni subsp. jejuni serotype O:6 (strain 81116 / NCTC 11828)</name>
    <dbReference type="NCBI Taxonomy" id="407148"/>
    <lineage>
        <taxon>Bacteria</taxon>
        <taxon>Pseudomonadati</taxon>
        <taxon>Campylobacterota</taxon>
        <taxon>Epsilonproteobacteria</taxon>
        <taxon>Campylobacterales</taxon>
        <taxon>Campylobacteraceae</taxon>
        <taxon>Campylobacter</taxon>
    </lineage>
</organism>
<keyword id="KW-0479">Metal-binding</keyword>
<keyword id="KW-0687">Ribonucleoprotein</keyword>
<keyword id="KW-0689">Ribosomal protein</keyword>
<keyword id="KW-0694">RNA-binding</keyword>
<keyword id="KW-0699">rRNA-binding</keyword>
<keyword id="KW-0862">Zinc</keyword>
<comment type="function">
    <text evidence="1">Binds the 23S rRNA.</text>
</comment>
<comment type="cofactor">
    <cofactor evidence="1">
        <name>Zn(2+)</name>
        <dbReference type="ChEBI" id="CHEBI:29105"/>
    </cofactor>
    <text evidence="1">Binds 1 zinc ion per subunit.</text>
</comment>
<comment type="subunit">
    <text evidence="1">Part of the 50S ribosomal subunit.</text>
</comment>
<comment type="similarity">
    <text evidence="1">Belongs to the bacterial ribosomal protein bL31 family. Type A subfamily.</text>
</comment>